<evidence type="ECO:0000250" key="1">
    <source>
        <dbReference type="UniProtKB" id="Q3UM83"/>
    </source>
</evidence>
<evidence type="ECO:0000255" key="2"/>
<evidence type="ECO:0000255" key="3">
    <source>
        <dbReference type="PROSITE-ProRule" id="PRU00040"/>
    </source>
</evidence>
<evidence type="ECO:0000256" key="4">
    <source>
        <dbReference type="SAM" id="MobiDB-lite"/>
    </source>
</evidence>
<evidence type="ECO:0000269" key="5">
    <source>
    </source>
</evidence>
<evidence type="ECO:0000303" key="6">
    <source>
    </source>
</evidence>
<evidence type="ECO:0000305" key="7"/>
<sequence>MEESWEAAPGGQAGAELPMEPVGSLVPTLEQPQVPAKVRQPEGPESSPSPAGAVEKAAGAGLEPSSKKKPPSPRPGSPRVPPLSLGYGVCPEPPSPGPALVKLPRNGEAPGAEPAPSAWAPMELQVDVRVKPVGAAGGSSTPSPRPSTRFLKVPVPESPAFSRHADPAHQLLLRAPSQGGTWGRRSPLAAARTESGCDAEGRASPAEGSAGSPGSPTCCRCKELGLEKEDAALLPRAGLDGDEKLPRAVTLTGLPMYVKSLYWALAFMAVLLAVSGVVIVVLASRAGARCQQCPPGWVLSEEHCYYFSAEAQAWEASQAFCSAYHATLPLLSHTQDFLGRYPVSRHSWVGAWRGPQGWHWIDEAPLPPQLLPEDGEDNLDINCGALEEGTLVAANCSTPRPWVCAKGTQ</sequence>
<accession>A4D1S0</accession>
<accession>Q2NL79</accession>
<accession>Q6ZTV6</accession>
<keyword id="KW-0025">Alternative splicing</keyword>
<keyword id="KW-1015">Disulfide bond</keyword>
<keyword id="KW-0430">Lectin</keyword>
<keyword id="KW-0472">Membrane</keyword>
<keyword id="KW-0597">Phosphoprotein</keyword>
<keyword id="KW-1267">Proteomics identification</keyword>
<keyword id="KW-1185">Reference proteome</keyword>
<keyword id="KW-0812">Transmembrane</keyword>
<keyword id="KW-1133">Transmembrane helix</keyword>
<gene>
    <name type="primary">KLRG2</name>
    <name type="synonym">CLEC15B</name>
</gene>
<reference key="1">
    <citation type="journal article" date="2004" name="Nat. Genet.">
        <title>Complete sequencing and characterization of 21,243 full-length human cDNAs.</title>
        <authorList>
            <person name="Ota T."/>
            <person name="Suzuki Y."/>
            <person name="Nishikawa T."/>
            <person name="Otsuki T."/>
            <person name="Sugiyama T."/>
            <person name="Irie R."/>
            <person name="Wakamatsu A."/>
            <person name="Hayashi K."/>
            <person name="Sato H."/>
            <person name="Nagai K."/>
            <person name="Kimura K."/>
            <person name="Makita H."/>
            <person name="Sekine M."/>
            <person name="Obayashi M."/>
            <person name="Nishi T."/>
            <person name="Shibahara T."/>
            <person name="Tanaka T."/>
            <person name="Ishii S."/>
            <person name="Yamamoto J."/>
            <person name="Saito K."/>
            <person name="Kawai Y."/>
            <person name="Isono Y."/>
            <person name="Nakamura Y."/>
            <person name="Nagahari K."/>
            <person name="Murakami K."/>
            <person name="Yasuda T."/>
            <person name="Iwayanagi T."/>
            <person name="Wagatsuma M."/>
            <person name="Shiratori A."/>
            <person name="Sudo H."/>
            <person name="Hosoiri T."/>
            <person name="Kaku Y."/>
            <person name="Kodaira H."/>
            <person name="Kondo H."/>
            <person name="Sugawara M."/>
            <person name="Takahashi M."/>
            <person name="Kanda K."/>
            <person name="Yokoi T."/>
            <person name="Furuya T."/>
            <person name="Kikkawa E."/>
            <person name="Omura Y."/>
            <person name="Abe K."/>
            <person name="Kamihara K."/>
            <person name="Katsuta N."/>
            <person name="Sato K."/>
            <person name="Tanikawa M."/>
            <person name="Yamazaki M."/>
            <person name="Ninomiya K."/>
            <person name="Ishibashi T."/>
            <person name="Yamashita H."/>
            <person name="Murakawa K."/>
            <person name="Fujimori K."/>
            <person name="Tanai H."/>
            <person name="Kimata M."/>
            <person name="Watanabe M."/>
            <person name="Hiraoka S."/>
            <person name="Chiba Y."/>
            <person name="Ishida S."/>
            <person name="Ono Y."/>
            <person name="Takiguchi S."/>
            <person name="Watanabe S."/>
            <person name="Yosida M."/>
            <person name="Hotuta T."/>
            <person name="Kusano J."/>
            <person name="Kanehori K."/>
            <person name="Takahashi-Fujii A."/>
            <person name="Hara H."/>
            <person name="Tanase T.-O."/>
            <person name="Nomura Y."/>
            <person name="Togiya S."/>
            <person name="Komai F."/>
            <person name="Hara R."/>
            <person name="Takeuchi K."/>
            <person name="Arita M."/>
            <person name="Imose N."/>
            <person name="Musashino K."/>
            <person name="Yuuki H."/>
            <person name="Oshima A."/>
            <person name="Sasaki N."/>
            <person name="Aotsuka S."/>
            <person name="Yoshikawa Y."/>
            <person name="Matsunawa H."/>
            <person name="Ichihara T."/>
            <person name="Shiohata N."/>
            <person name="Sano S."/>
            <person name="Moriya S."/>
            <person name="Momiyama H."/>
            <person name="Satoh N."/>
            <person name="Takami S."/>
            <person name="Terashima Y."/>
            <person name="Suzuki O."/>
            <person name="Nakagawa S."/>
            <person name="Senoh A."/>
            <person name="Mizoguchi H."/>
            <person name="Goto Y."/>
            <person name="Shimizu F."/>
            <person name="Wakebe H."/>
            <person name="Hishigaki H."/>
            <person name="Watanabe T."/>
            <person name="Sugiyama A."/>
            <person name="Takemoto M."/>
            <person name="Kawakami B."/>
            <person name="Yamazaki M."/>
            <person name="Watanabe K."/>
            <person name="Kumagai A."/>
            <person name="Itakura S."/>
            <person name="Fukuzumi Y."/>
            <person name="Fujimori Y."/>
            <person name="Komiyama M."/>
            <person name="Tashiro H."/>
            <person name="Tanigami A."/>
            <person name="Fujiwara T."/>
            <person name="Ono T."/>
            <person name="Yamada K."/>
            <person name="Fujii Y."/>
            <person name="Ozaki K."/>
            <person name="Hirao M."/>
            <person name="Ohmori Y."/>
            <person name="Kawabata A."/>
            <person name="Hikiji T."/>
            <person name="Kobatake N."/>
            <person name="Inagaki H."/>
            <person name="Ikema Y."/>
            <person name="Okamoto S."/>
            <person name="Okitani R."/>
            <person name="Kawakami T."/>
            <person name="Noguchi S."/>
            <person name="Itoh T."/>
            <person name="Shigeta K."/>
            <person name="Senba T."/>
            <person name="Matsumura K."/>
            <person name="Nakajima Y."/>
            <person name="Mizuno T."/>
            <person name="Morinaga M."/>
            <person name="Sasaki M."/>
            <person name="Togashi T."/>
            <person name="Oyama M."/>
            <person name="Hata H."/>
            <person name="Watanabe M."/>
            <person name="Komatsu T."/>
            <person name="Mizushima-Sugano J."/>
            <person name="Satoh T."/>
            <person name="Shirai Y."/>
            <person name="Takahashi Y."/>
            <person name="Nakagawa K."/>
            <person name="Okumura K."/>
            <person name="Nagase T."/>
            <person name="Nomura N."/>
            <person name="Kikuchi H."/>
            <person name="Masuho Y."/>
            <person name="Yamashita R."/>
            <person name="Nakai K."/>
            <person name="Yada T."/>
            <person name="Nakamura Y."/>
            <person name="Ohara O."/>
            <person name="Isogai T."/>
            <person name="Sugano S."/>
        </authorList>
    </citation>
    <scope>NUCLEOTIDE SEQUENCE [LARGE SCALE MRNA] (ISOFORM 1)</scope>
    <source>
        <tissue>Thymus</tissue>
    </source>
</reference>
<reference key="2">
    <citation type="journal article" date="2003" name="Nature">
        <title>The DNA sequence of human chromosome 7.</title>
        <authorList>
            <person name="Hillier L.W."/>
            <person name="Fulton R.S."/>
            <person name="Fulton L.A."/>
            <person name="Graves T.A."/>
            <person name="Pepin K.H."/>
            <person name="Wagner-McPherson C."/>
            <person name="Layman D."/>
            <person name="Maas J."/>
            <person name="Jaeger S."/>
            <person name="Walker R."/>
            <person name="Wylie K."/>
            <person name="Sekhon M."/>
            <person name="Becker M.C."/>
            <person name="O'Laughlin M.D."/>
            <person name="Schaller M.E."/>
            <person name="Fewell G.A."/>
            <person name="Delehaunty K.D."/>
            <person name="Miner T.L."/>
            <person name="Nash W.E."/>
            <person name="Cordes M."/>
            <person name="Du H."/>
            <person name="Sun H."/>
            <person name="Edwards J."/>
            <person name="Bradshaw-Cordum H."/>
            <person name="Ali J."/>
            <person name="Andrews S."/>
            <person name="Isak A."/>
            <person name="Vanbrunt A."/>
            <person name="Nguyen C."/>
            <person name="Du F."/>
            <person name="Lamar B."/>
            <person name="Courtney L."/>
            <person name="Kalicki J."/>
            <person name="Ozersky P."/>
            <person name="Bielicki L."/>
            <person name="Scott K."/>
            <person name="Holmes A."/>
            <person name="Harkins R."/>
            <person name="Harris A."/>
            <person name="Strong C.M."/>
            <person name="Hou S."/>
            <person name="Tomlinson C."/>
            <person name="Dauphin-Kohlberg S."/>
            <person name="Kozlowicz-Reilly A."/>
            <person name="Leonard S."/>
            <person name="Rohlfing T."/>
            <person name="Rock S.M."/>
            <person name="Tin-Wollam A.-M."/>
            <person name="Abbott A."/>
            <person name="Minx P."/>
            <person name="Maupin R."/>
            <person name="Strowmatt C."/>
            <person name="Latreille P."/>
            <person name="Miller N."/>
            <person name="Johnson D."/>
            <person name="Murray J."/>
            <person name="Woessner J.P."/>
            <person name="Wendl M.C."/>
            <person name="Yang S.-P."/>
            <person name="Schultz B.R."/>
            <person name="Wallis J.W."/>
            <person name="Spieth J."/>
            <person name="Bieri T.A."/>
            <person name="Nelson J.O."/>
            <person name="Berkowicz N."/>
            <person name="Wohldmann P.E."/>
            <person name="Cook L.L."/>
            <person name="Hickenbotham M.T."/>
            <person name="Eldred J."/>
            <person name="Williams D."/>
            <person name="Bedell J.A."/>
            <person name="Mardis E.R."/>
            <person name="Clifton S.W."/>
            <person name="Chissoe S.L."/>
            <person name="Marra M.A."/>
            <person name="Raymond C."/>
            <person name="Haugen E."/>
            <person name="Gillett W."/>
            <person name="Zhou Y."/>
            <person name="James R."/>
            <person name="Phelps K."/>
            <person name="Iadanoto S."/>
            <person name="Bubb K."/>
            <person name="Simms E."/>
            <person name="Levy R."/>
            <person name="Clendenning J."/>
            <person name="Kaul R."/>
            <person name="Kent W.J."/>
            <person name="Furey T.S."/>
            <person name="Baertsch R.A."/>
            <person name="Brent M.R."/>
            <person name="Keibler E."/>
            <person name="Flicek P."/>
            <person name="Bork P."/>
            <person name="Suyama M."/>
            <person name="Bailey J.A."/>
            <person name="Portnoy M.E."/>
            <person name="Torrents D."/>
            <person name="Chinwalla A.T."/>
            <person name="Gish W.R."/>
            <person name="Eddy S.R."/>
            <person name="McPherson J.D."/>
            <person name="Olson M.V."/>
            <person name="Eichler E.E."/>
            <person name="Green E.D."/>
            <person name="Waterston R.H."/>
            <person name="Wilson R.K."/>
        </authorList>
    </citation>
    <scope>NUCLEOTIDE SEQUENCE [LARGE SCALE GENOMIC DNA]</scope>
</reference>
<reference key="3">
    <citation type="journal article" date="2003" name="Science">
        <title>Human chromosome 7: DNA sequence and biology.</title>
        <authorList>
            <person name="Scherer S.W."/>
            <person name="Cheung J."/>
            <person name="MacDonald J.R."/>
            <person name="Osborne L.R."/>
            <person name="Nakabayashi K."/>
            <person name="Herbrick J.-A."/>
            <person name="Carson A.R."/>
            <person name="Parker-Katiraee L."/>
            <person name="Skaug J."/>
            <person name="Khaja R."/>
            <person name="Zhang J."/>
            <person name="Hudek A.K."/>
            <person name="Li M."/>
            <person name="Haddad M."/>
            <person name="Duggan G.E."/>
            <person name="Fernandez B.A."/>
            <person name="Kanematsu E."/>
            <person name="Gentles S."/>
            <person name="Christopoulos C.C."/>
            <person name="Choufani S."/>
            <person name="Kwasnicka D."/>
            <person name="Zheng X.H."/>
            <person name="Lai Z."/>
            <person name="Nusskern D.R."/>
            <person name="Zhang Q."/>
            <person name="Gu Z."/>
            <person name="Lu F."/>
            <person name="Zeesman S."/>
            <person name="Nowaczyk M.J."/>
            <person name="Teshima I."/>
            <person name="Chitayat D."/>
            <person name="Shuman C."/>
            <person name="Weksberg R."/>
            <person name="Zackai E.H."/>
            <person name="Grebe T.A."/>
            <person name="Cox S.R."/>
            <person name="Kirkpatrick S.J."/>
            <person name="Rahman N."/>
            <person name="Friedman J.M."/>
            <person name="Heng H.H.Q."/>
            <person name="Pelicci P.G."/>
            <person name="Lo-Coco F."/>
            <person name="Belloni E."/>
            <person name="Shaffer L.G."/>
            <person name="Pober B."/>
            <person name="Morton C.C."/>
            <person name="Gusella J.F."/>
            <person name="Bruns G.A.P."/>
            <person name="Korf B.R."/>
            <person name="Quade B.J."/>
            <person name="Ligon A.H."/>
            <person name="Ferguson H."/>
            <person name="Higgins A.W."/>
            <person name="Leach N.T."/>
            <person name="Herrick S.R."/>
            <person name="Lemyre E."/>
            <person name="Farra C.G."/>
            <person name="Kim H.-G."/>
            <person name="Summers A.M."/>
            <person name="Gripp K.W."/>
            <person name="Roberts W."/>
            <person name="Szatmari P."/>
            <person name="Winsor E.J.T."/>
            <person name="Grzeschik K.-H."/>
            <person name="Teebi A."/>
            <person name="Minassian B.A."/>
            <person name="Kere J."/>
            <person name="Armengol L."/>
            <person name="Pujana M.A."/>
            <person name="Estivill X."/>
            <person name="Wilson M.D."/>
            <person name="Koop B.F."/>
            <person name="Tosi S."/>
            <person name="Moore G.E."/>
            <person name="Boright A.P."/>
            <person name="Zlotorynski E."/>
            <person name="Kerem B."/>
            <person name="Kroisel P.M."/>
            <person name="Petek E."/>
            <person name="Oscier D.G."/>
            <person name="Mould S.J."/>
            <person name="Doehner H."/>
            <person name="Doehner K."/>
            <person name="Rommens J.M."/>
            <person name="Vincent J.B."/>
            <person name="Venter J.C."/>
            <person name="Li P.W."/>
            <person name="Mural R.J."/>
            <person name="Adams M.D."/>
            <person name="Tsui L.-C."/>
        </authorList>
    </citation>
    <scope>NUCLEOTIDE SEQUENCE [LARGE SCALE GENOMIC DNA]</scope>
    <scope>VARIANT THR-152</scope>
</reference>
<reference key="4">
    <citation type="journal article" date="2004" name="Genome Res.">
        <title>The status, quality, and expansion of the NIH full-length cDNA project: the Mammalian Gene Collection (MGC).</title>
        <authorList>
            <consortium name="The MGC Project Team"/>
        </authorList>
    </citation>
    <scope>NUCLEOTIDE SEQUENCE [LARGE SCALE MRNA] (ISOFORMS 1 AND 2)</scope>
    <source>
        <tissue>Eye</tissue>
    </source>
</reference>
<reference key="5">
    <citation type="journal article" date="2009" name="Anal. Chem.">
        <title>Lys-N and trypsin cover complementary parts of the phosphoproteome in a refined SCX-based approach.</title>
        <authorList>
            <person name="Gauci S."/>
            <person name="Helbig A.O."/>
            <person name="Slijper M."/>
            <person name="Krijgsveld J."/>
            <person name="Heck A.J."/>
            <person name="Mohammed S."/>
        </authorList>
    </citation>
    <scope>IDENTIFICATION BY MASS SPECTROMETRY [LARGE SCALE ANALYSIS]</scope>
</reference>
<comment type="subcellular location">
    <subcellularLocation>
        <location evidence="7">Membrane</location>
        <topology evidence="7">Single-pass membrane protein</topology>
    </subcellularLocation>
</comment>
<comment type="alternative products">
    <event type="alternative splicing"/>
    <isoform>
        <id>A4D1S0-1</id>
        <name>1</name>
        <sequence type="displayed"/>
    </isoform>
    <isoform>
        <id>A4D1S0-2</id>
        <name>2</name>
        <sequence type="described" ref="VSP_030779 VSP_030780"/>
    </isoform>
</comment>
<protein>
    <recommendedName>
        <fullName>Killer cell lectin-like receptor subfamily G member 2</fullName>
    </recommendedName>
    <alternativeName>
        <fullName>C-type lectin domain family 15 member B</fullName>
    </alternativeName>
</protein>
<name>KLRG2_HUMAN</name>
<feature type="chain" id="PRO_0000316792" description="Killer cell lectin-like receptor subfamily G member 2">
    <location>
        <begin position="1"/>
        <end position="409"/>
    </location>
</feature>
<feature type="transmembrane region" description="Helical" evidence="2">
    <location>
        <begin position="263"/>
        <end position="283"/>
    </location>
</feature>
<feature type="domain" description="C-type lectin" evidence="3">
    <location>
        <begin position="300"/>
        <end position="405"/>
    </location>
</feature>
<feature type="region of interest" description="Disordered" evidence="4">
    <location>
        <begin position="1"/>
        <end position="120"/>
    </location>
</feature>
<feature type="region of interest" description="Disordered" evidence="4">
    <location>
        <begin position="193"/>
        <end position="216"/>
    </location>
</feature>
<feature type="compositionally biased region" description="Low complexity" evidence="4">
    <location>
        <begin position="41"/>
        <end position="53"/>
    </location>
</feature>
<feature type="compositionally biased region" description="Pro residues" evidence="4">
    <location>
        <begin position="72"/>
        <end position="81"/>
    </location>
</feature>
<feature type="compositionally biased region" description="Low complexity" evidence="4">
    <location>
        <begin position="104"/>
        <end position="120"/>
    </location>
</feature>
<feature type="compositionally biased region" description="Low complexity" evidence="4">
    <location>
        <begin position="202"/>
        <end position="216"/>
    </location>
</feature>
<feature type="modified residue" description="Phosphoserine" evidence="1">
    <location>
        <position position="158"/>
    </location>
</feature>
<feature type="disulfide bond" evidence="3">
    <location>
        <begin position="321"/>
        <end position="404"/>
    </location>
</feature>
<feature type="disulfide bond" evidence="3">
    <location>
        <begin position="383"/>
        <end position="396"/>
    </location>
</feature>
<feature type="splice variant" id="VSP_030779" description="In isoform 2." evidence="6">
    <original>GLPMYVKSLYWALAFMAVLLAVSGVVIVVLASRAGARCQQCPPGWVLSEEHCYYFSAEAQ</original>
    <variation>DSLRTARTIWISTVGPWRKARWWLQTAALQDPGSVPRGPSDLGSAWSSACQADAAPPTGEAS</variation>
    <location>
        <begin position="253"/>
        <end position="312"/>
    </location>
</feature>
<feature type="splice variant" id="VSP_030780" description="In isoform 2." evidence="6">
    <location>
        <begin position="313"/>
        <end position="409"/>
    </location>
</feature>
<feature type="sequence variant" id="VAR_038396" description="In dbSNP:rs1860150." evidence="5">
    <original>K</original>
    <variation>T</variation>
    <location>
        <position position="152"/>
    </location>
</feature>
<feature type="sequence variant" id="VAR_038397" description="In dbSNP:rs17160911.">
    <original>G</original>
    <variation>A</variation>
    <location>
        <position position="339"/>
    </location>
</feature>
<feature type="sequence conflict" description="In Ref. 3; EAL24036." evidence="7" ref="3">
    <original>A</original>
    <variation>V</variation>
    <location>
        <position position="109"/>
    </location>
</feature>
<dbReference type="EMBL" id="AK126174">
    <property type="protein sequence ID" value="BAC86473.1"/>
    <property type="molecule type" value="mRNA"/>
</dbReference>
<dbReference type="EMBL" id="AC005531">
    <property type="status" value="NOT_ANNOTATED_CDS"/>
    <property type="molecule type" value="Genomic_DNA"/>
</dbReference>
<dbReference type="EMBL" id="CH236950">
    <property type="protein sequence ID" value="EAL24036.1"/>
    <property type="molecule type" value="Genomic_DNA"/>
</dbReference>
<dbReference type="EMBL" id="BC104963">
    <property type="protein sequence ID" value="AAI04964.1"/>
    <property type="molecule type" value="mRNA"/>
</dbReference>
<dbReference type="EMBL" id="BC104965">
    <property type="protein sequence ID" value="AAI04966.1"/>
    <property type="molecule type" value="mRNA"/>
</dbReference>
<dbReference type="EMBL" id="BC110858">
    <property type="protein sequence ID" value="AAI10859.1"/>
    <property type="molecule type" value="mRNA"/>
</dbReference>
<dbReference type="CCDS" id="CCDS5854.1">
    <molecule id="A4D1S0-1"/>
</dbReference>
<dbReference type="RefSeq" id="NP_940910.1">
    <molecule id="A4D1S0-1"/>
    <property type="nucleotide sequence ID" value="NM_198508.4"/>
</dbReference>
<dbReference type="SMR" id="A4D1S0"/>
<dbReference type="BioGRID" id="131397">
    <property type="interactions" value="111"/>
</dbReference>
<dbReference type="FunCoup" id="A4D1S0">
    <property type="interactions" value="415"/>
</dbReference>
<dbReference type="IntAct" id="A4D1S0">
    <property type="interactions" value="105"/>
</dbReference>
<dbReference type="MINT" id="A4D1S0"/>
<dbReference type="STRING" id="9606.ENSP00000339356"/>
<dbReference type="GlyGen" id="A4D1S0">
    <property type="glycosylation" value="1 site"/>
</dbReference>
<dbReference type="iPTMnet" id="A4D1S0"/>
<dbReference type="PhosphoSitePlus" id="A4D1S0"/>
<dbReference type="BioMuta" id="KLRG2"/>
<dbReference type="jPOST" id="A4D1S0"/>
<dbReference type="MassIVE" id="A4D1S0"/>
<dbReference type="PaxDb" id="9606-ENSP00000339356"/>
<dbReference type="PeptideAtlas" id="A4D1S0"/>
<dbReference type="ProteomicsDB" id="627">
    <molecule id="A4D1S0-1"/>
</dbReference>
<dbReference type="ProteomicsDB" id="628">
    <molecule id="A4D1S0-2"/>
</dbReference>
<dbReference type="Antibodypedia" id="2744">
    <property type="antibodies" value="70 antibodies from 16 providers"/>
</dbReference>
<dbReference type="DNASU" id="346689"/>
<dbReference type="Ensembl" id="ENST00000340940.5">
    <molecule id="A4D1S0-1"/>
    <property type="protein sequence ID" value="ENSP00000339356.4"/>
    <property type="gene ID" value="ENSG00000188883.5"/>
</dbReference>
<dbReference type="Ensembl" id="ENST00000393039.2">
    <molecule id="A4D1S0-2"/>
    <property type="protein sequence ID" value="ENSP00000376759.2"/>
    <property type="gene ID" value="ENSG00000188883.5"/>
</dbReference>
<dbReference type="GeneID" id="346689"/>
<dbReference type="KEGG" id="hsa:346689"/>
<dbReference type="MANE-Select" id="ENST00000340940.5">
    <property type="protein sequence ID" value="ENSP00000339356.4"/>
    <property type="RefSeq nucleotide sequence ID" value="NM_198508.4"/>
    <property type="RefSeq protein sequence ID" value="NP_940910.1"/>
</dbReference>
<dbReference type="UCSC" id="uc003vvb.4">
    <molecule id="A4D1S0-1"/>
    <property type="organism name" value="human"/>
</dbReference>
<dbReference type="AGR" id="HGNC:24778"/>
<dbReference type="CTD" id="346689"/>
<dbReference type="DisGeNET" id="346689"/>
<dbReference type="GeneCards" id="KLRG2"/>
<dbReference type="HGNC" id="HGNC:24778">
    <property type="gene designation" value="KLRG2"/>
</dbReference>
<dbReference type="HPA" id="ENSG00000188883">
    <property type="expression patterns" value="Tissue enhanced (esophagus, salivary gland, thyroid gland)"/>
</dbReference>
<dbReference type="neXtProt" id="NX_A4D1S0"/>
<dbReference type="OpenTargets" id="ENSG00000188883"/>
<dbReference type="PharmGKB" id="PA162393624"/>
<dbReference type="VEuPathDB" id="HostDB:ENSG00000188883"/>
<dbReference type="eggNOG" id="KOG4297">
    <property type="taxonomic scope" value="Eukaryota"/>
</dbReference>
<dbReference type="GeneTree" id="ENSGT00940000162997"/>
<dbReference type="HOGENOM" id="CLU_049894_8_6_1"/>
<dbReference type="InParanoid" id="A4D1S0"/>
<dbReference type="OMA" id="EEHCYYF"/>
<dbReference type="OrthoDB" id="9837851at2759"/>
<dbReference type="PAN-GO" id="A4D1S0">
    <property type="GO annotations" value="0 GO annotations based on evolutionary models"/>
</dbReference>
<dbReference type="PhylomeDB" id="A4D1S0"/>
<dbReference type="TreeFam" id="TF351467"/>
<dbReference type="PathwayCommons" id="A4D1S0"/>
<dbReference type="SignaLink" id="A4D1S0"/>
<dbReference type="BioGRID-ORCS" id="346689">
    <property type="hits" value="15 hits in 1154 CRISPR screens"/>
</dbReference>
<dbReference type="ChiTaRS" id="KLRG2">
    <property type="organism name" value="human"/>
</dbReference>
<dbReference type="GenomeRNAi" id="346689"/>
<dbReference type="Pharos" id="A4D1S0">
    <property type="development level" value="Tdark"/>
</dbReference>
<dbReference type="PRO" id="PR:A4D1S0"/>
<dbReference type="Proteomes" id="UP000005640">
    <property type="component" value="Chromosome 7"/>
</dbReference>
<dbReference type="RNAct" id="A4D1S0">
    <property type="molecule type" value="protein"/>
</dbReference>
<dbReference type="Bgee" id="ENSG00000188883">
    <property type="expression patterns" value="Expressed in primordial germ cell in gonad and 48 other cell types or tissues"/>
</dbReference>
<dbReference type="GO" id="GO:0016020">
    <property type="term" value="C:membrane"/>
    <property type="evidence" value="ECO:0007669"/>
    <property type="project" value="UniProtKB-SubCell"/>
</dbReference>
<dbReference type="GO" id="GO:0030246">
    <property type="term" value="F:carbohydrate binding"/>
    <property type="evidence" value="ECO:0007669"/>
    <property type="project" value="UniProtKB-KW"/>
</dbReference>
<dbReference type="CDD" id="cd03593">
    <property type="entry name" value="CLECT_NK_receptors_like"/>
    <property type="match status" value="1"/>
</dbReference>
<dbReference type="Gene3D" id="3.10.100.10">
    <property type="entry name" value="Mannose-Binding Protein A, subunit A"/>
    <property type="match status" value="1"/>
</dbReference>
<dbReference type="InterPro" id="IPR001304">
    <property type="entry name" value="C-type_lectin-like"/>
</dbReference>
<dbReference type="InterPro" id="IPR016186">
    <property type="entry name" value="C-type_lectin-like/link_sf"/>
</dbReference>
<dbReference type="InterPro" id="IPR016187">
    <property type="entry name" value="CTDL_fold"/>
</dbReference>
<dbReference type="InterPro" id="IPR043318">
    <property type="entry name" value="KLRG2"/>
</dbReference>
<dbReference type="InterPro" id="IPR033992">
    <property type="entry name" value="NKR-like_CTLD"/>
</dbReference>
<dbReference type="PANTHER" id="PTHR47606">
    <property type="entry name" value="KILLER CELL LECTIN-LIKE RECEPTOR SUBFAMILY G MEMBER 2"/>
    <property type="match status" value="1"/>
</dbReference>
<dbReference type="PANTHER" id="PTHR47606:SF1">
    <property type="entry name" value="KILLER CELL LECTIN-LIKE RECEPTOR SUBFAMILY G MEMBER 2"/>
    <property type="match status" value="1"/>
</dbReference>
<dbReference type="Pfam" id="PF00059">
    <property type="entry name" value="Lectin_C"/>
    <property type="match status" value="1"/>
</dbReference>
<dbReference type="SMART" id="SM00034">
    <property type="entry name" value="CLECT"/>
    <property type="match status" value="1"/>
</dbReference>
<dbReference type="SUPFAM" id="SSF56436">
    <property type="entry name" value="C-type lectin-like"/>
    <property type="match status" value="1"/>
</dbReference>
<dbReference type="PROSITE" id="PS50041">
    <property type="entry name" value="C_TYPE_LECTIN_2"/>
    <property type="match status" value="1"/>
</dbReference>
<proteinExistence type="evidence at protein level"/>
<organism>
    <name type="scientific">Homo sapiens</name>
    <name type="common">Human</name>
    <dbReference type="NCBI Taxonomy" id="9606"/>
    <lineage>
        <taxon>Eukaryota</taxon>
        <taxon>Metazoa</taxon>
        <taxon>Chordata</taxon>
        <taxon>Craniata</taxon>
        <taxon>Vertebrata</taxon>
        <taxon>Euteleostomi</taxon>
        <taxon>Mammalia</taxon>
        <taxon>Eutheria</taxon>
        <taxon>Euarchontoglires</taxon>
        <taxon>Primates</taxon>
        <taxon>Haplorrhini</taxon>
        <taxon>Catarrhini</taxon>
        <taxon>Hominidae</taxon>
        <taxon>Homo</taxon>
    </lineage>
</organism>